<proteinExistence type="inferred from homology"/>
<comment type="function">
    <text evidence="2">Aminopeptidase that preferentially cleaves di- and tripeptides. Also has low epoxide hydrolase activity (in vitro). Can hydrolyze the epoxide leukotriene LTA(4) but it forms preferentially 5,6-dihydroxy-7,9,11,14-eicosatetraenoic acid rather than the cytokine leukotriene B(4) as the product compared to the homologous mammalian enzyme (in vitro).</text>
</comment>
<comment type="catalytic activity">
    <reaction evidence="2">
        <text>an epoxide + H2O = an ethanediol</text>
        <dbReference type="Rhea" id="RHEA:19037"/>
        <dbReference type="ChEBI" id="CHEBI:15377"/>
        <dbReference type="ChEBI" id="CHEBI:32955"/>
        <dbReference type="ChEBI" id="CHEBI:140594"/>
        <dbReference type="EC" id="3.3.2.10"/>
    </reaction>
</comment>
<comment type="cofactor">
    <cofactor evidence="2">
        <name>Zn(2+)</name>
        <dbReference type="ChEBI" id="CHEBI:29105"/>
    </cofactor>
    <text evidence="2">Binds 1 zinc ion per subunit.</text>
</comment>
<comment type="subcellular location">
    <subcellularLocation>
        <location evidence="2">Cytoplasm</location>
    </subcellularLocation>
    <subcellularLocation>
        <location evidence="2">Nucleus</location>
    </subcellularLocation>
</comment>
<comment type="similarity">
    <text evidence="4">Belongs to the peptidase M1 family.</text>
</comment>
<name>LKHA4_YARLI</name>
<feature type="chain" id="PRO_0000324942" description="Leucine aminopeptidase 2">
    <location>
        <begin position="1"/>
        <end position="647"/>
    </location>
</feature>
<feature type="active site" description="Proton acceptor" evidence="3">
    <location>
        <position position="325"/>
    </location>
</feature>
<feature type="active site" description="Proton donor" evidence="3">
    <location>
        <position position="418"/>
    </location>
</feature>
<feature type="binding site" evidence="1">
    <location>
        <begin position="169"/>
        <end position="171"/>
    </location>
    <ligand>
        <name>substrate</name>
    </ligand>
</feature>
<feature type="binding site" evidence="1">
    <location>
        <begin position="295"/>
        <end position="300"/>
    </location>
    <ligand>
        <name>substrate</name>
    </ligand>
</feature>
<feature type="binding site" evidence="3">
    <location>
        <position position="324"/>
    </location>
    <ligand>
        <name>Zn(2+)</name>
        <dbReference type="ChEBI" id="CHEBI:29105"/>
        <note>catalytic</note>
    </ligand>
</feature>
<feature type="binding site" evidence="3">
    <location>
        <position position="328"/>
    </location>
    <ligand>
        <name>Zn(2+)</name>
        <dbReference type="ChEBI" id="CHEBI:29105"/>
        <note>catalytic</note>
    </ligand>
</feature>
<feature type="binding site" evidence="3">
    <location>
        <position position="347"/>
    </location>
    <ligand>
        <name>Zn(2+)</name>
        <dbReference type="ChEBI" id="CHEBI:29105"/>
        <note>catalytic</note>
    </ligand>
</feature>
<gene>
    <name type="ordered locus">YALI0F00396g</name>
</gene>
<keyword id="KW-0963">Cytoplasm</keyword>
<keyword id="KW-0378">Hydrolase</keyword>
<keyword id="KW-0479">Metal-binding</keyword>
<keyword id="KW-0482">Metalloprotease</keyword>
<keyword id="KW-0539">Nucleus</keyword>
<keyword id="KW-0645">Protease</keyword>
<keyword id="KW-1185">Reference proteome</keyword>
<keyword id="KW-0862">Zinc</keyword>
<sequence>MFSLRALSGVVTRSLVRAPHRRTMSHAARLLPHRVPQKKGPERDPSTLSNYEHFKPTNTTVCLKVDWTDQKLAGSVTYDLTVENSPKNLVLDTSYLDIQEVQVNGHKADFSIGERHNIFGSPLTITLPPNSGDKLQVKIAYSTTPSCTALQWLTPEQTAGKKAPYFFSQCQAIHARSVMPAFDTPSVKSTFDIEIESDHPVVASGLPIKSSNDTGKFVFRQKVPIPAYLFALAGGDLDSAPIGPRSDVYSEPCDLHKCQYEFEADTEKFINAAENIVFPYEWEKYDVLVLPPSFPYGGMENPNITFATPTLVSGDRQNVDVIAHELAHSWSGNLVTNCSWEHFWLNEGWTVYLERRIVGALEGEQQRHFSAIIGWNALEESVKLMSRDPVQESYTQLVVDLKPNGGADPDDAFSSVPYEKGSTFLFFLETEIGQAKFDPFVKHYFKHFRYKSLDTYQFIDCLFDFYANDKEVTDKLNAIDWEKTLFAPGLPNKPKFDTTLADECYSLASRWKDASDASAFSAKDIASFNSSQMVVFLITLSEYEGKDGFSWANKKELISNMGDIYSLANSSNPEVIAKWYSIAILAKVESEYPKLADWLATVGRMKFVRPGYRALNSVDPKLAKETFEKNKDFYHPICRDMVSKDLQ</sequence>
<evidence type="ECO:0000250" key="1"/>
<evidence type="ECO:0000250" key="2">
    <source>
        <dbReference type="UniProtKB" id="Q10740"/>
    </source>
</evidence>
<evidence type="ECO:0000255" key="3">
    <source>
        <dbReference type="PROSITE-ProRule" id="PRU10095"/>
    </source>
</evidence>
<evidence type="ECO:0000305" key="4"/>
<accession>Q6C3E5</accession>
<dbReference type="EC" id="3.4.11.-"/>
<dbReference type="EC" id="3.3.2.10"/>
<dbReference type="EMBL" id="CR382132">
    <property type="protein sequence ID" value="CAG77619.1"/>
    <property type="molecule type" value="Genomic_DNA"/>
</dbReference>
<dbReference type="RefSeq" id="XP_504817.1">
    <property type="nucleotide sequence ID" value="XM_504817.1"/>
</dbReference>
<dbReference type="SMR" id="Q6C3E5"/>
<dbReference type="FunCoup" id="Q6C3E5">
    <property type="interactions" value="1067"/>
</dbReference>
<dbReference type="STRING" id="284591.Q6C3E5"/>
<dbReference type="MEROPS" id="M01.034"/>
<dbReference type="EnsemblFungi" id="CAG77619">
    <property type="protein sequence ID" value="CAG77619"/>
    <property type="gene ID" value="YALI0_F00396g"/>
</dbReference>
<dbReference type="KEGG" id="yli:2908541"/>
<dbReference type="VEuPathDB" id="FungiDB:YALI0_F00396g"/>
<dbReference type="HOGENOM" id="CLU_014505_1_1_1"/>
<dbReference type="InParanoid" id="Q6C3E5"/>
<dbReference type="OMA" id="CTALQWM"/>
<dbReference type="OrthoDB" id="78804at4891"/>
<dbReference type="Proteomes" id="UP000001300">
    <property type="component" value="Chromosome F"/>
</dbReference>
<dbReference type="GO" id="GO:0005829">
    <property type="term" value="C:cytosol"/>
    <property type="evidence" value="ECO:0000318"/>
    <property type="project" value="GO_Central"/>
</dbReference>
<dbReference type="GO" id="GO:0000328">
    <property type="term" value="C:fungal-type vacuole lumen"/>
    <property type="evidence" value="ECO:0007669"/>
    <property type="project" value="EnsemblFungi"/>
</dbReference>
<dbReference type="GO" id="GO:0005771">
    <property type="term" value="C:multivesicular body"/>
    <property type="evidence" value="ECO:0007669"/>
    <property type="project" value="EnsemblFungi"/>
</dbReference>
<dbReference type="GO" id="GO:0005634">
    <property type="term" value="C:nucleus"/>
    <property type="evidence" value="ECO:0007669"/>
    <property type="project" value="UniProtKB-SubCell"/>
</dbReference>
<dbReference type="GO" id="GO:0061957">
    <property type="term" value="C:NVT complex"/>
    <property type="evidence" value="ECO:0007669"/>
    <property type="project" value="EnsemblFungi"/>
</dbReference>
<dbReference type="GO" id="GO:0004177">
    <property type="term" value="F:aminopeptidase activity"/>
    <property type="evidence" value="ECO:0000250"/>
    <property type="project" value="UniProtKB"/>
</dbReference>
<dbReference type="GO" id="GO:0004301">
    <property type="term" value="F:epoxide hydrolase activity"/>
    <property type="evidence" value="ECO:0000250"/>
    <property type="project" value="UniProtKB"/>
</dbReference>
<dbReference type="GO" id="GO:0008237">
    <property type="term" value="F:metallopeptidase activity"/>
    <property type="evidence" value="ECO:0007669"/>
    <property type="project" value="UniProtKB-KW"/>
</dbReference>
<dbReference type="GO" id="GO:0008270">
    <property type="term" value="F:zinc ion binding"/>
    <property type="evidence" value="ECO:0000250"/>
    <property type="project" value="UniProtKB"/>
</dbReference>
<dbReference type="GO" id="GO:0120113">
    <property type="term" value="P:cytoplasm to vacuole targeting by the NVT pathway"/>
    <property type="evidence" value="ECO:0007669"/>
    <property type="project" value="EnsemblFungi"/>
</dbReference>
<dbReference type="GO" id="GO:0006629">
    <property type="term" value="P:lipid metabolic process"/>
    <property type="evidence" value="ECO:0007669"/>
    <property type="project" value="EnsemblFungi"/>
</dbReference>
<dbReference type="GO" id="GO:0043171">
    <property type="term" value="P:peptide catabolic process"/>
    <property type="evidence" value="ECO:0000250"/>
    <property type="project" value="UniProtKB"/>
</dbReference>
<dbReference type="GO" id="GO:0030163">
    <property type="term" value="P:protein catabolic process"/>
    <property type="evidence" value="ECO:0007669"/>
    <property type="project" value="EnsemblFungi"/>
</dbReference>
<dbReference type="GO" id="GO:0006508">
    <property type="term" value="P:proteolysis"/>
    <property type="evidence" value="ECO:0007669"/>
    <property type="project" value="UniProtKB-KW"/>
</dbReference>
<dbReference type="CDD" id="cd09599">
    <property type="entry name" value="M1_LTA4H"/>
    <property type="match status" value="1"/>
</dbReference>
<dbReference type="FunFam" id="1.10.390.10:FF:000009">
    <property type="entry name" value="Leukotriene A(4) hydrolase"/>
    <property type="match status" value="1"/>
</dbReference>
<dbReference type="FunFam" id="1.25.40.320:FF:000001">
    <property type="entry name" value="Leukotriene A(4) hydrolase"/>
    <property type="match status" value="1"/>
</dbReference>
<dbReference type="FunFam" id="2.60.40.1730:FF:000004">
    <property type="entry name" value="Leukotriene A(4) hydrolase"/>
    <property type="match status" value="1"/>
</dbReference>
<dbReference type="FunFam" id="3.30.2010.30:FF:000001">
    <property type="entry name" value="Leukotriene A(4) hydrolase"/>
    <property type="match status" value="1"/>
</dbReference>
<dbReference type="Gene3D" id="3.30.2010.30">
    <property type="match status" value="1"/>
</dbReference>
<dbReference type="Gene3D" id="1.10.390.10">
    <property type="entry name" value="Neutral Protease Domain 2"/>
    <property type="match status" value="1"/>
</dbReference>
<dbReference type="Gene3D" id="1.25.40.320">
    <property type="entry name" value="Peptidase M1, leukotriene A4 hydrolase/aminopeptidase C-terminal domain"/>
    <property type="match status" value="1"/>
</dbReference>
<dbReference type="Gene3D" id="2.60.40.1730">
    <property type="entry name" value="tricorn interacting facor f3 domain"/>
    <property type="match status" value="1"/>
</dbReference>
<dbReference type="InterPro" id="IPR045357">
    <property type="entry name" value="Aminopeptidase_N-like_N"/>
</dbReference>
<dbReference type="InterPro" id="IPR042097">
    <property type="entry name" value="Aminopeptidase_N-like_N_sf"/>
</dbReference>
<dbReference type="InterPro" id="IPR016024">
    <property type="entry name" value="ARM-type_fold"/>
</dbReference>
<dbReference type="InterPro" id="IPR012777">
    <property type="entry name" value="LTA4H"/>
</dbReference>
<dbReference type="InterPro" id="IPR049980">
    <property type="entry name" value="LTA4H_cat"/>
</dbReference>
<dbReference type="InterPro" id="IPR038502">
    <property type="entry name" value="M1_LTA-4_hydro/amino_C_sf"/>
</dbReference>
<dbReference type="InterPro" id="IPR034015">
    <property type="entry name" value="M1_LTA4H"/>
</dbReference>
<dbReference type="InterPro" id="IPR001930">
    <property type="entry name" value="Peptidase_M1"/>
</dbReference>
<dbReference type="InterPro" id="IPR015211">
    <property type="entry name" value="Peptidase_M1_C"/>
</dbReference>
<dbReference type="InterPro" id="IPR014782">
    <property type="entry name" value="Peptidase_M1_dom"/>
</dbReference>
<dbReference type="InterPro" id="IPR027268">
    <property type="entry name" value="Peptidase_M4/M1_CTD_sf"/>
</dbReference>
<dbReference type="NCBIfam" id="TIGR02411">
    <property type="entry name" value="leuko_A4_hydro"/>
    <property type="match status" value="1"/>
</dbReference>
<dbReference type="PANTHER" id="PTHR45726">
    <property type="entry name" value="LEUKOTRIENE A-4 HYDROLASE"/>
    <property type="match status" value="1"/>
</dbReference>
<dbReference type="PANTHER" id="PTHR45726:SF3">
    <property type="entry name" value="LEUKOTRIENE A-4 HYDROLASE"/>
    <property type="match status" value="1"/>
</dbReference>
<dbReference type="Pfam" id="PF09127">
    <property type="entry name" value="Leuk-A4-hydro_C"/>
    <property type="match status" value="1"/>
</dbReference>
<dbReference type="Pfam" id="PF01433">
    <property type="entry name" value="Peptidase_M1"/>
    <property type="match status" value="1"/>
</dbReference>
<dbReference type="Pfam" id="PF17900">
    <property type="entry name" value="Peptidase_M1_N"/>
    <property type="match status" value="1"/>
</dbReference>
<dbReference type="PRINTS" id="PR00756">
    <property type="entry name" value="ALADIPTASE"/>
</dbReference>
<dbReference type="SMART" id="SM01263">
    <property type="entry name" value="Leuk-A4-hydro_C"/>
    <property type="match status" value="1"/>
</dbReference>
<dbReference type="SUPFAM" id="SSF48371">
    <property type="entry name" value="ARM repeat"/>
    <property type="match status" value="1"/>
</dbReference>
<dbReference type="SUPFAM" id="SSF63737">
    <property type="entry name" value="Leukotriene A4 hydrolase N-terminal domain"/>
    <property type="match status" value="1"/>
</dbReference>
<dbReference type="SUPFAM" id="SSF55486">
    <property type="entry name" value="Metalloproteases ('zincins'), catalytic domain"/>
    <property type="match status" value="1"/>
</dbReference>
<dbReference type="PROSITE" id="PS00142">
    <property type="entry name" value="ZINC_PROTEASE"/>
    <property type="match status" value="1"/>
</dbReference>
<organism>
    <name type="scientific">Yarrowia lipolytica (strain CLIB 122 / E 150)</name>
    <name type="common">Yeast</name>
    <name type="synonym">Candida lipolytica</name>
    <dbReference type="NCBI Taxonomy" id="284591"/>
    <lineage>
        <taxon>Eukaryota</taxon>
        <taxon>Fungi</taxon>
        <taxon>Dikarya</taxon>
        <taxon>Ascomycota</taxon>
        <taxon>Saccharomycotina</taxon>
        <taxon>Dipodascomycetes</taxon>
        <taxon>Dipodascales</taxon>
        <taxon>Dipodascales incertae sedis</taxon>
        <taxon>Yarrowia</taxon>
    </lineage>
</organism>
<reference key="1">
    <citation type="journal article" date="2004" name="Nature">
        <title>Genome evolution in yeasts.</title>
        <authorList>
            <person name="Dujon B."/>
            <person name="Sherman D."/>
            <person name="Fischer G."/>
            <person name="Durrens P."/>
            <person name="Casaregola S."/>
            <person name="Lafontaine I."/>
            <person name="de Montigny J."/>
            <person name="Marck C."/>
            <person name="Neuveglise C."/>
            <person name="Talla E."/>
            <person name="Goffard N."/>
            <person name="Frangeul L."/>
            <person name="Aigle M."/>
            <person name="Anthouard V."/>
            <person name="Babour A."/>
            <person name="Barbe V."/>
            <person name="Barnay S."/>
            <person name="Blanchin S."/>
            <person name="Beckerich J.-M."/>
            <person name="Beyne E."/>
            <person name="Bleykasten C."/>
            <person name="Boisrame A."/>
            <person name="Boyer J."/>
            <person name="Cattolico L."/>
            <person name="Confanioleri F."/>
            <person name="de Daruvar A."/>
            <person name="Despons L."/>
            <person name="Fabre E."/>
            <person name="Fairhead C."/>
            <person name="Ferry-Dumazet H."/>
            <person name="Groppi A."/>
            <person name="Hantraye F."/>
            <person name="Hennequin C."/>
            <person name="Jauniaux N."/>
            <person name="Joyet P."/>
            <person name="Kachouri R."/>
            <person name="Kerrest A."/>
            <person name="Koszul R."/>
            <person name="Lemaire M."/>
            <person name="Lesur I."/>
            <person name="Ma L."/>
            <person name="Muller H."/>
            <person name="Nicaud J.-M."/>
            <person name="Nikolski M."/>
            <person name="Oztas S."/>
            <person name="Ozier-Kalogeropoulos O."/>
            <person name="Pellenz S."/>
            <person name="Potier S."/>
            <person name="Richard G.-F."/>
            <person name="Straub M.-L."/>
            <person name="Suleau A."/>
            <person name="Swennen D."/>
            <person name="Tekaia F."/>
            <person name="Wesolowski-Louvel M."/>
            <person name="Westhof E."/>
            <person name="Wirth B."/>
            <person name="Zeniou-Meyer M."/>
            <person name="Zivanovic Y."/>
            <person name="Bolotin-Fukuhara M."/>
            <person name="Thierry A."/>
            <person name="Bouchier C."/>
            <person name="Caudron B."/>
            <person name="Scarpelli C."/>
            <person name="Gaillardin C."/>
            <person name="Weissenbach J."/>
            <person name="Wincker P."/>
            <person name="Souciet J.-L."/>
        </authorList>
    </citation>
    <scope>NUCLEOTIDE SEQUENCE [LARGE SCALE GENOMIC DNA]</scope>
    <source>
        <strain>CLIB 122 / E 150</strain>
    </source>
</reference>
<protein>
    <recommendedName>
        <fullName>Leucine aminopeptidase 2</fullName>
        <ecNumber>3.4.11.-</ecNumber>
    </recommendedName>
    <alternativeName>
        <fullName>Epoxide hydrolase</fullName>
        <ecNumber>3.3.2.10</ecNumber>
    </alternativeName>
    <alternativeName>
        <fullName>Leukotriene A-4 hydrolase homolog</fullName>
        <shortName>LTA-4 hydrolase</shortName>
    </alternativeName>
</protein>